<name>I1BA_CONAE</name>
<protein>
    <recommendedName>
        <fullName>Conotoxin ar11a</fullName>
    </recommendedName>
    <alternativeName>
        <fullName>Ar11.1</fullName>
    </alternativeName>
</protein>
<feature type="signal peptide" evidence="2">
    <location>
        <begin position="1"/>
        <end position="19"/>
    </location>
</feature>
<feature type="propeptide" id="PRO_0000314082" evidence="3">
    <location>
        <begin position="20"/>
        <end position="36"/>
    </location>
</feature>
<feature type="chain" id="PRO_0000314083" description="Conotoxin ar11a">
    <location>
        <begin position="37"/>
        <end position="75"/>
    </location>
</feature>
<feature type="disulfide bond" evidence="1">
    <location>
        <begin position="39"/>
        <end position="53"/>
    </location>
</feature>
<feature type="disulfide bond" evidence="1">
    <location>
        <begin position="46"/>
        <end position="58"/>
    </location>
</feature>
<feature type="disulfide bond" evidence="1">
    <location>
        <begin position="52"/>
        <end position="63"/>
    </location>
</feature>
<feature type="disulfide bond" evidence="1">
    <location>
        <begin position="57"/>
        <end position="70"/>
    </location>
</feature>
<evidence type="ECO:0000250" key="1">
    <source>
        <dbReference type="UniProtKB" id="Q7Z094"/>
    </source>
</evidence>
<evidence type="ECO:0000255" key="2"/>
<evidence type="ECO:0000269" key="3">
    <source>
    </source>
</evidence>
<evidence type="ECO:0000305" key="4"/>
<comment type="function">
    <text evidence="3">Both natural (L-Leu form) and synthetic (D-Leu from) peptides equally cause sensitivity to touch and body tremor. Neither L-Leu form nor D-Leu form is active on nerve-muscle preparation.</text>
</comment>
<comment type="subcellular location">
    <subcellularLocation>
        <location evidence="3">Secreted</location>
    </subcellularLocation>
</comment>
<comment type="tissue specificity">
    <text evidence="3">Expressed by the venom duct.</text>
</comment>
<comment type="domain">
    <text>The cysteine framework is XI (C-C-CC-CC-C-C).</text>
</comment>
<comment type="mass spectrometry"/>
<comment type="similarity">
    <text evidence="4">Belongs to the conotoxin I1 superfamily.</text>
</comment>
<proteinExistence type="evidence at protein level"/>
<reference key="1">
    <citation type="journal article" date="2008" name="Toxicon">
        <title>I(1)-superfamily conotoxins and prediction of single D-amino acid occurrence.</title>
        <authorList>
            <person name="Buczek O."/>
            <person name="Jimenez E.C."/>
            <person name="Yoshikami D."/>
            <person name="Imperial J.S."/>
            <person name="Watkins M."/>
            <person name="Morrison A."/>
            <person name="Olivera B.M."/>
        </authorList>
    </citation>
    <scope>NUCLEOTIDE SEQUENCE [MRNA]</scope>
    <scope>PROTEIN SEQUENCE OF 37-75</scope>
    <scope>SYNTHESIS OF [L-LEU-37]AR11A AND [D-LEU-37]AR11A</scope>
    <scope>FUNCTION</scope>
    <scope>SUBCELLULAR LOCATION</scope>
    <scope>TISSUE SPECIFICITY</scope>
    <scope>MASS SPECTROMETRY</scope>
    <source>
        <tissue>Venom</tissue>
        <tissue>Venom duct</tissue>
    </source>
</reference>
<dbReference type="SMR" id="P0C607"/>
<dbReference type="ConoServer" id="2801">
    <property type="toxin name" value="ArXIA precursor"/>
</dbReference>
<dbReference type="GO" id="GO:0005576">
    <property type="term" value="C:extracellular region"/>
    <property type="evidence" value="ECO:0007669"/>
    <property type="project" value="UniProtKB-SubCell"/>
</dbReference>
<dbReference type="GO" id="GO:0099106">
    <property type="term" value="F:ion channel regulator activity"/>
    <property type="evidence" value="ECO:0007669"/>
    <property type="project" value="UniProtKB-KW"/>
</dbReference>
<dbReference type="GO" id="GO:0090729">
    <property type="term" value="F:toxin activity"/>
    <property type="evidence" value="ECO:0007669"/>
    <property type="project" value="UniProtKB-KW"/>
</dbReference>
<dbReference type="PROSITE" id="PS60019">
    <property type="entry name" value="I_CONOTOXIN"/>
    <property type="match status" value="1"/>
</dbReference>
<organism>
    <name type="scientific">Conus arenatus</name>
    <name type="common">Sand-dusted cone</name>
    <dbReference type="NCBI Taxonomy" id="89451"/>
    <lineage>
        <taxon>Eukaryota</taxon>
        <taxon>Metazoa</taxon>
        <taxon>Spiralia</taxon>
        <taxon>Lophotrochozoa</taxon>
        <taxon>Mollusca</taxon>
        <taxon>Gastropoda</taxon>
        <taxon>Caenogastropoda</taxon>
        <taxon>Neogastropoda</taxon>
        <taxon>Conoidea</taxon>
        <taxon>Conidae</taxon>
        <taxon>Conus</taxon>
    </lineage>
</organism>
<accession>P0C607</accession>
<keyword id="KW-0903">Direct protein sequencing</keyword>
<keyword id="KW-1015">Disulfide bond</keyword>
<keyword id="KW-0872">Ion channel impairing toxin</keyword>
<keyword id="KW-0528">Neurotoxin</keyword>
<keyword id="KW-0964">Secreted</keyword>
<keyword id="KW-0732">Signal</keyword>
<keyword id="KW-0800">Toxin</keyword>
<sequence>MKLCATFLLVLVTLPLVTGEKSSERSLSGAILRGVRRTCSRRGHRCIRDSQCCGGMCCQGNRCFVAIRRCFHLPF</sequence>